<reference key="1">
    <citation type="journal article" date="2005" name="Nucleic Acids Res.">
        <title>Genome dynamics and diversity of Shigella species, the etiologic agents of bacillary dysentery.</title>
        <authorList>
            <person name="Yang F."/>
            <person name="Yang J."/>
            <person name="Zhang X."/>
            <person name="Chen L."/>
            <person name="Jiang Y."/>
            <person name="Yan Y."/>
            <person name="Tang X."/>
            <person name="Wang J."/>
            <person name="Xiong Z."/>
            <person name="Dong J."/>
            <person name="Xue Y."/>
            <person name="Zhu Y."/>
            <person name="Xu X."/>
            <person name="Sun L."/>
            <person name="Chen S."/>
            <person name="Nie H."/>
            <person name="Peng J."/>
            <person name="Xu J."/>
            <person name="Wang Y."/>
            <person name="Yuan Z."/>
            <person name="Wen Y."/>
            <person name="Yao Z."/>
            <person name="Shen Y."/>
            <person name="Qiang B."/>
            <person name="Hou Y."/>
            <person name="Yu J."/>
            <person name="Jin Q."/>
        </authorList>
    </citation>
    <scope>NUCLEOTIDE SEQUENCE [LARGE SCALE GENOMIC DNA]</scope>
    <source>
        <strain>Sd197</strain>
    </source>
</reference>
<comment type="function">
    <text evidence="1">Bifunctional enzyme that catalyzes the oxidative decarboxylation of UDP-glucuronic acid (UDP-GlcUA) to UDP-4-keto-arabinose (UDP-Ara4O) and the addition of a formyl group to UDP-4-amino-4-deoxy-L-arabinose (UDP-L-Ara4N) to form UDP-L-4-formamido-arabinose (UDP-L-Ara4FN). The modified arabinose is attached to lipid A and is required for resistance to polymyxin and cationic antimicrobial peptides.</text>
</comment>
<comment type="catalytic activity">
    <reaction evidence="1">
        <text>UDP-alpha-D-glucuronate + NAD(+) = UDP-beta-L-threo-pentopyranos-4-ulose + CO2 + NADH</text>
        <dbReference type="Rhea" id="RHEA:24702"/>
        <dbReference type="ChEBI" id="CHEBI:16526"/>
        <dbReference type="ChEBI" id="CHEBI:57540"/>
        <dbReference type="ChEBI" id="CHEBI:57945"/>
        <dbReference type="ChEBI" id="CHEBI:58052"/>
        <dbReference type="ChEBI" id="CHEBI:58710"/>
        <dbReference type="EC" id="1.1.1.305"/>
    </reaction>
</comment>
<comment type="catalytic activity">
    <reaction evidence="1">
        <text>UDP-4-amino-4-deoxy-beta-L-arabinose + (6R)-10-formyltetrahydrofolate = UDP-4-deoxy-4-formamido-beta-L-arabinose + (6S)-5,6,7,8-tetrahydrofolate + H(+)</text>
        <dbReference type="Rhea" id="RHEA:24706"/>
        <dbReference type="ChEBI" id="CHEBI:15378"/>
        <dbReference type="ChEBI" id="CHEBI:57453"/>
        <dbReference type="ChEBI" id="CHEBI:58708"/>
        <dbReference type="ChEBI" id="CHEBI:58709"/>
        <dbReference type="ChEBI" id="CHEBI:195366"/>
        <dbReference type="EC" id="2.1.2.13"/>
    </reaction>
</comment>
<comment type="pathway">
    <text evidence="1">Nucleotide-sugar biosynthesis; UDP-4-deoxy-4-formamido-beta-L-arabinose biosynthesis; UDP-4-deoxy-4-formamido-beta-L-arabinose from UDP-alpha-D-glucuronate: step 1/3.</text>
</comment>
<comment type="pathway">
    <text evidence="1">Nucleotide-sugar biosynthesis; UDP-4-deoxy-4-formamido-beta-L-arabinose biosynthesis; UDP-4-deoxy-4-formamido-beta-L-arabinose from UDP-alpha-D-glucuronate: step 3/3.</text>
</comment>
<comment type="pathway">
    <text evidence="1">Bacterial outer membrane biogenesis; lipopolysaccharide biosynthesis.</text>
</comment>
<comment type="subunit">
    <text evidence="1">Homohexamer, formed by a dimer of trimers.</text>
</comment>
<comment type="similarity">
    <text evidence="1">In the N-terminal section; belongs to the Fmt family. UDP-L-Ara4N formyltransferase subfamily.</text>
</comment>
<comment type="similarity">
    <text evidence="1">In the C-terminal section; belongs to the NAD(P)-dependent epimerase/dehydratase family. UDP-glucuronic acid decarboxylase subfamily.</text>
</comment>
<comment type="sequence caution" evidence="2">
    <conflict type="erroneous termination">
        <sequence resource="EMBL-CDS" id="ABB62522"/>
    </conflict>
    <text>Truncated C-terminus.</text>
</comment>
<organism>
    <name type="scientific">Shigella dysenteriae serotype 1 (strain Sd197)</name>
    <dbReference type="NCBI Taxonomy" id="300267"/>
    <lineage>
        <taxon>Bacteria</taxon>
        <taxon>Pseudomonadati</taxon>
        <taxon>Pseudomonadota</taxon>
        <taxon>Gammaproteobacteria</taxon>
        <taxon>Enterobacterales</taxon>
        <taxon>Enterobacteriaceae</taxon>
        <taxon>Shigella</taxon>
    </lineage>
</organism>
<feature type="chain" id="PRO_0000281728" description="Bifunctional polymyxin resistance protein ArnA">
    <location>
        <begin position="1"/>
        <end position="660"/>
    </location>
</feature>
<feature type="region of interest" description="Formyltransferase ArnAFT">
    <location>
        <begin position="1"/>
        <end position="304"/>
    </location>
</feature>
<feature type="region of interest" description="Dehydrogenase ArnADH">
    <location>
        <begin position="314"/>
        <end position="660"/>
    </location>
</feature>
<feature type="active site" description="Proton donor; for formyltransferase activity" evidence="1">
    <location>
        <position position="104"/>
    </location>
</feature>
<feature type="active site" description="Proton acceptor; for decarboxylase activity" evidence="1">
    <location>
        <position position="434"/>
    </location>
</feature>
<feature type="active site" description="Proton donor; for decarboxylase activity" evidence="1">
    <location>
        <position position="619"/>
    </location>
</feature>
<feature type="binding site" evidence="1">
    <location>
        <begin position="86"/>
        <end position="88"/>
    </location>
    <ligand>
        <name>(6R)-10-formyltetrahydrofolate</name>
        <dbReference type="ChEBI" id="CHEBI:195366"/>
    </ligand>
</feature>
<feature type="binding site" evidence="1">
    <location>
        <position position="114"/>
    </location>
    <ligand>
        <name>(6R)-10-formyltetrahydrofolate</name>
        <dbReference type="ChEBI" id="CHEBI:195366"/>
    </ligand>
</feature>
<feature type="binding site" evidence="1">
    <location>
        <begin position="136"/>
        <end position="140"/>
    </location>
    <ligand>
        <name>(6R)-10-formyltetrahydrofolate</name>
        <dbReference type="ChEBI" id="CHEBI:195366"/>
    </ligand>
</feature>
<feature type="binding site" evidence="1">
    <location>
        <position position="347"/>
    </location>
    <ligand>
        <name>NAD(+)</name>
        <dbReference type="ChEBI" id="CHEBI:57540"/>
    </ligand>
</feature>
<feature type="binding site" evidence="1">
    <location>
        <begin position="368"/>
        <end position="369"/>
    </location>
    <ligand>
        <name>NAD(+)</name>
        <dbReference type="ChEBI" id="CHEBI:57540"/>
    </ligand>
</feature>
<feature type="binding site" evidence="1">
    <location>
        <position position="393"/>
    </location>
    <ligand>
        <name>UDP-alpha-D-glucuronate</name>
        <dbReference type="ChEBI" id="CHEBI:58052"/>
    </ligand>
</feature>
<feature type="binding site" evidence="1">
    <location>
        <position position="398"/>
    </location>
    <ligand>
        <name>UDP-alpha-D-glucuronate</name>
        <dbReference type="ChEBI" id="CHEBI:58052"/>
    </ligand>
</feature>
<feature type="binding site" evidence="1">
    <location>
        <begin position="432"/>
        <end position="433"/>
    </location>
    <ligand>
        <name>UDP-alpha-D-glucuronate</name>
        <dbReference type="ChEBI" id="CHEBI:58052"/>
    </ligand>
</feature>
<feature type="binding site" evidence="1">
    <location>
        <position position="460"/>
    </location>
    <ligand>
        <name>UDP-alpha-D-glucuronate</name>
        <dbReference type="ChEBI" id="CHEBI:58052"/>
    </ligand>
</feature>
<feature type="binding site" evidence="1">
    <location>
        <position position="492"/>
    </location>
    <ligand>
        <name>UDP-alpha-D-glucuronate</name>
        <dbReference type="ChEBI" id="CHEBI:58052"/>
    </ligand>
</feature>
<feature type="binding site" evidence="1">
    <location>
        <begin position="526"/>
        <end position="535"/>
    </location>
    <ligand>
        <name>UDP-alpha-D-glucuronate</name>
        <dbReference type="ChEBI" id="CHEBI:58052"/>
    </ligand>
</feature>
<feature type="binding site" evidence="1">
    <location>
        <position position="613"/>
    </location>
    <ligand>
        <name>UDP-alpha-D-glucuronate</name>
        <dbReference type="ChEBI" id="CHEBI:58052"/>
    </ligand>
</feature>
<feature type="site" description="Transition state stabilizer" evidence="1">
    <location>
        <position position="102"/>
    </location>
</feature>
<feature type="site" description="Raises pKa of active site His" evidence="1">
    <location>
        <position position="140"/>
    </location>
</feature>
<proteinExistence type="inferred from homology"/>
<protein>
    <recommendedName>
        <fullName evidence="1">Bifunctional polymyxin resistance protein ArnA</fullName>
    </recommendedName>
    <domain>
        <recommendedName>
            <fullName evidence="1">UDP-4-amino-4-deoxy-L-arabinose formyltransferase</fullName>
            <ecNumber evidence="1">2.1.2.13</ecNumber>
        </recommendedName>
        <alternativeName>
            <fullName evidence="1">ArnAFT</fullName>
        </alternativeName>
        <alternativeName>
            <fullName evidence="1">UDP-L-Ara4N formyltransferase</fullName>
        </alternativeName>
    </domain>
    <domain>
        <recommendedName>
            <fullName evidence="1">UDP-glucuronic acid oxidase, UDP-4-keto-hexauronic acid decarboxylating</fullName>
            <ecNumber evidence="1">1.1.1.305</ecNumber>
        </recommendedName>
        <alternativeName>
            <fullName evidence="1">ArnADH</fullName>
        </alternativeName>
        <alternativeName>
            <fullName evidence="1">UDP-GlcUA decarboxylase</fullName>
        </alternativeName>
        <alternativeName>
            <fullName evidence="1">UDP-glucuronic acid dehydrogenase</fullName>
        </alternativeName>
    </domain>
</protein>
<name>ARNA_SHIDS</name>
<dbReference type="EC" id="2.1.2.13" evidence="1"/>
<dbReference type="EC" id="1.1.1.305" evidence="1"/>
<dbReference type="EMBL" id="CP000034">
    <property type="protein sequence ID" value="ABB62522.1"/>
    <property type="status" value="ALT_SEQ"/>
    <property type="molecule type" value="Genomic_DNA"/>
</dbReference>
<dbReference type="SMR" id="Q32DT3"/>
<dbReference type="STRING" id="300267.SDY_2451"/>
<dbReference type="EnsemblBacteria" id="ABB62522">
    <property type="protein sequence ID" value="ABB62522"/>
    <property type="gene ID" value="SDY_2451"/>
</dbReference>
<dbReference type="KEGG" id="sdy:SDY_2451"/>
<dbReference type="HOGENOM" id="CLU_007383_23_1_6"/>
<dbReference type="UniPathway" id="UPA00030"/>
<dbReference type="UniPathway" id="UPA00032">
    <property type="reaction ID" value="UER00492"/>
</dbReference>
<dbReference type="UniPathway" id="UPA00032">
    <property type="reaction ID" value="UER00494"/>
</dbReference>
<dbReference type="Proteomes" id="UP000002716">
    <property type="component" value="Chromosome"/>
</dbReference>
<dbReference type="GO" id="GO:0016020">
    <property type="term" value="C:membrane"/>
    <property type="evidence" value="ECO:0007669"/>
    <property type="project" value="GOC"/>
</dbReference>
<dbReference type="GO" id="GO:0016831">
    <property type="term" value="F:carboxy-lyase activity"/>
    <property type="evidence" value="ECO:0007669"/>
    <property type="project" value="InterPro"/>
</dbReference>
<dbReference type="GO" id="GO:0099619">
    <property type="term" value="F:UDP-4-amino-4-deoxy-L-arabinose formyltransferase activity"/>
    <property type="evidence" value="ECO:0007669"/>
    <property type="project" value="UniProtKB-EC"/>
</dbReference>
<dbReference type="GO" id="GO:0099618">
    <property type="term" value="F:UDP-glucuronate dehydrogenase activity"/>
    <property type="evidence" value="ECO:0007669"/>
    <property type="project" value="UniProtKB-EC"/>
</dbReference>
<dbReference type="GO" id="GO:0009245">
    <property type="term" value="P:lipid A biosynthetic process"/>
    <property type="evidence" value="ECO:0007669"/>
    <property type="project" value="UniProtKB-KW"/>
</dbReference>
<dbReference type="GO" id="GO:0009103">
    <property type="term" value="P:lipopolysaccharide biosynthetic process"/>
    <property type="evidence" value="ECO:0007669"/>
    <property type="project" value="UniProtKB-UniRule"/>
</dbReference>
<dbReference type="GO" id="GO:0046677">
    <property type="term" value="P:response to antibiotic"/>
    <property type="evidence" value="ECO:0007669"/>
    <property type="project" value="UniProtKB-KW"/>
</dbReference>
<dbReference type="CDD" id="cd08702">
    <property type="entry name" value="Arna_FMT_C"/>
    <property type="match status" value="1"/>
</dbReference>
<dbReference type="CDD" id="cd05257">
    <property type="entry name" value="Arna_like_SDR_e"/>
    <property type="match status" value="1"/>
</dbReference>
<dbReference type="CDD" id="cd08644">
    <property type="entry name" value="FMT_core_ArnA_N"/>
    <property type="match status" value="1"/>
</dbReference>
<dbReference type="FunFam" id="3.40.50.12230:FF:000002">
    <property type="entry name" value="Bifunctional polymyxin resistance protein ArnA"/>
    <property type="match status" value="1"/>
</dbReference>
<dbReference type="FunFam" id="3.40.50.720:FF:000197">
    <property type="entry name" value="Bifunctional polymyxin resistance protein ArnA"/>
    <property type="match status" value="1"/>
</dbReference>
<dbReference type="Gene3D" id="3.40.50.12230">
    <property type="match status" value="1"/>
</dbReference>
<dbReference type="Gene3D" id="3.40.50.720">
    <property type="entry name" value="NAD(P)-binding Rossmann-like Domain"/>
    <property type="match status" value="1"/>
</dbReference>
<dbReference type="HAMAP" id="MF_01166">
    <property type="entry name" value="ArnA"/>
    <property type="match status" value="1"/>
</dbReference>
<dbReference type="InterPro" id="IPR045869">
    <property type="entry name" value="Arna-like_SDR_e"/>
</dbReference>
<dbReference type="InterPro" id="IPR021168">
    <property type="entry name" value="Bifun_polymyxin_resist_ArnA"/>
</dbReference>
<dbReference type="InterPro" id="IPR001509">
    <property type="entry name" value="Epimerase_deHydtase"/>
</dbReference>
<dbReference type="InterPro" id="IPR005793">
    <property type="entry name" value="Formyl_trans_C"/>
</dbReference>
<dbReference type="InterPro" id="IPR002376">
    <property type="entry name" value="Formyl_transf_N"/>
</dbReference>
<dbReference type="InterPro" id="IPR036477">
    <property type="entry name" value="Formyl_transf_N_sf"/>
</dbReference>
<dbReference type="InterPro" id="IPR011034">
    <property type="entry name" value="Formyl_transferase-like_C_sf"/>
</dbReference>
<dbReference type="InterPro" id="IPR050177">
    <property type="entry name" value="Lipid_A_modif_metabolic_enz"/>
</dbReference>
<dbReference type="InterPro" id="IPR036291">
    <property type="entry name" value="NAD(P)-bd_dom_sf"/>
</dbReference>
<dbReference type="NCBIfam" id="NF005414">
    <property type="entry name" value="PRK06988.1"/>
    <property type="match status" value="1"/>
</dbReference>
<dbReference type="NCBIfam" id="NF005998">
    <property type="entry name" value="PRK08125.1"/>
    <property type="match status" value="1"/>
</dbReference>
<dbReference type="NCBIfam" id="NF008872">
    <property type="entry name" value="PRK11908.1"/>
    <property type="match status" value="1"/>
</dbReference>
<dbReference type="PANTHER" id="PTHR43245">
    <property type="entry name" value="BIFUNCTIONAL POLYMYXIN RESISTANCE PROTEIN ARNA"/>
    <property type="match status" value="1"/>
</dbReference>
<dbReference type="PANTHER" id="PTHR43245:SF13">
    <property type="entry name" value="UDP-D-APIOSE_UDP-D-XYLOSE SYNTHASE 2"/>
    <property type="match status" value="1"/>
</dbReference>
<dbReference type="Pfam" id="PF01370">
    <property type="entry name" value="Epimerase"/>
    <property type="match status" value="1"/>
</dbReference>
<dbReference type="Pfam" id="PF02911">
    <property type="entry name" value="Formyl_trans_C"/>
    <property type="match status" value="1"/>
</dbReference>
<dbReference type="Pfam" id="PF00551">
    <property type="entry name" value="Formyl_trans_N"/>
    <property type="match status" value="1"/>
</dbReference>
<dbReference type="PIRSF" id="PIRSF036506">
    <property type="entry name" value="Bifun_polymyxin_resist_ArnA"/>
    <property type="match status" value="1"/>
</dbReference>
<dbReference type="SUPFAM" id="SSF50486">
    <property type="entry name" value="FMT C-terminal domain-like"/>
    <property type="match status" value="1"/>
</dbReference>
<dbReference type="SUPFAM" id="SSF53328">
    <property type="entry name" value="Formyltransferase"/>
    <property type="match status" value="1"/>
</dbReference>
<dbReference type="SUPFAM" id="SSF51735">
    <property type="entry name" value="NAD(P)-binding Rossmann-fold domains"/>
    <property type="match status" value="1"/>
</dbReference>
<accession>Q32DT3</accession>
<sequence length="660" mass="74193">MKTVVFAYHDMGCLGIEALLAAGYEISAIFTHTDNPGEKAFYGSVARLAAERGIPVYAPDDVNHPLWVERIAQLSPDVIFSFYYRHLICDEILQLAPAGAFNLHGSLLTKYRGRAPLNWVLVNGETETGVTLHRMVTRADAGAIVAQLRVAIAPDDIAITLHHKLCHAARQLLEQTLPAIKHGNILEIAQRENEATCFGRRTPDDSFLEWHKPASVLHNMVRAVADPWPGAFSYVGNQKFTVWSSRVHPHASKAQPGSVISVAPLLIACGDGALEIVTGQASDGITMQGSQLAQTLGLVQGSRLNSQPACAARRRTRVLILGVNGFIGNHLTERLLREDHYEVYGLDIGSDAISRFLNHPHFHFVEGDISIHSEWIEYHVKKCDVVLPLVAIATPIEYTRNPLRVFELDFEENLRIIRYCVKYRKRIIFPSTSEVYGMCSDKYFDEDHSNLIVGPVNKPRWIYSVSKQLLDRVIWAYGEKEGLQFTLFRPFNWMGPRLDNLNAARIGSSRAITQLILNLVEGSPIKLIDGGKQKRCFTDIRDGIEALYRIIENAGNRCDGEIINIGNPENEASIEELGEMLLASFEKHPLRHHFPPFAGFRVVESSSYYGKGYQDVEHRKPSIRNAHRCLDWEPKIDMQETIDETLDFFLRTVDLTDKPS</sequence>
<evidence type="ECO:0000255" key="1">
    <source>
        <dbReference type="HAMAP-Rule" id="MF_01166"/>
    </source>
</evidence>
<evidence type="ECO:0000305" key="2"/>
<keyword id="KW-0046">Antibiotic resistance</keyword>
<keyword id="KW-0441">Lipid A biosynthesis</keyword>
<keyword id="KW-0444">Lipid biosynthesis</keyword>
<keyword id="KW-0443">Lipid metabolism</keyword>
<keyword id="KW-0448">Lipopolysaccharide biosynthesis</keyword>
<keyword id="KW-0511">Multifunctional enzyme</keyword>
<keyword id="KW-0520">NAD</keyword>
<keyword id="KW-0560">Oxidoreductase</keyword>
<keyword id="KW-1185">Reference proteome</keyword>
<keyword id="KW-0808">Transferase</keyword>
<gene>
    <name evidence="1" type="primary">arnA</name>
    <name type="ordered locus">SDY_2451</name>
</gene>